<evidence type="ECO:0000269" key="1">
    <source>
    </source>
</evidence>
<evidence type="ECO:0000269" key="2">
    <source>
    </source>
</evidence>
<evidence type="ECO:0000305" key="3"/>
<evidence type="ECO:0000305" key="4">
    <source>
    </source>
</evidence>
<evidence type="ECO:0007829" key="5">
    <source>
        <dbReference type="PDB" id="3I9V"/>
    </source>
</evidence>
<evidence type="ECO:0007829" key="6">
    <source>
        <dbReference type="PDB" id="3IAM"/>
    </source>
</evidence>
<evidence type="ECO:0007829" key="7">
    <source>
        <dbReference type="PDB" id="6I1P"/>
    </source>
</evidence>
<accession>Q56220</accession>
<accession>Q5SM56</accession>
<name>NQO4_THET8</name>
<gene>
    <name type="primary">nqo4</name>
    <name type="ordered locus">TTHA0087</name>
</gene>
<comment type="function">
    <text evidence="1 2">NDH-1 shuttles electrons from NADH, via FMN and iron-sulfur (Fe-S) centers, to quinones in the respiratory chain. The immediate electron acceptor for the enzyme in this species is menaquinone. Couples the redox reaction to proton translocation (for every two electrons transferred, four hydrogen ions are translocated across the cytoplasmic membrane), and thus conserves the redox energy in a proton gradient required for the synthesis of ATP. The Nqo4 subunit may contain the quinone-binding site.</text>
</comment>
<comment type="catalytic activity">
    <reaction>
        <text>a quinone + NADH + 5 H(+)(in) = a quinol + NAD(+) + 4 H(+)(out)</text>
        <dbReference type="Rhea" id="RHEA:57888"/>
        <dbReference type="ChEBI" id="CHEBI:15378"/>
        <dbReference type="ChEBI" id="CHEBI:24646"/>
        <dbReference type="ChEBI" id="CHEBI:57540"/>
        <dbReference type="ChEBI" id="CHEBI:57945"/>
        <dbReference type="ChEBI" id="CHEBI:132124"/>
    </reaction>
</comment>
<comment type="subunit">
    <text evidence="1 2">NDH-1 is composed of 15 different subunits, Nqo1 to Nqo15. The complex has a L-shaped structure, with the hydrophobic arm (subunits Nqo7, Nqo8 and Nqo10 to Nqo14) embedded in the membrane and the hydrophilic peripheral arm (subunits Nqo1 to Nqo6, Nqo9 and Nqo15) protruding into the bacterial cytoplasm. The hydrophilic domain contains all the redox centers. This subunit interacts extensively with Nqo6.</text>
</comment>
<comment type="subcellular location">
    <subcellularLocation>
        <location evidence="4">Cell membrane</location>
        <topology evidence="4">Peripheral membrane protein</topology>
        <orientation evidence="4">Cytoplasmic side</orientation>
    </subcellularLocation>
</comment>
<comment type="similarity">
    <text evidence="3">Belongs to the complex I 49 kDa subunit family.</text>
</comment>
<dbReference type="EC" id="7.1.1.-"/>
<dbReference type="EMBL" id="U52917">
    <property type="protein sequence ID" value="AAA97941.1"/>
    <property type="molecule type" value="Genomic_DNA"/>
</dbReference>
<dbReference type="EMBL" id="AP008226">
    <property type="protein sequence ID" value="BAD69910.1"/>
    <property type="molecule type" value="Genomic_DNA"/>
</dbReference>
<dbReference type="PIR" id="T11901">
    <property type="entry name" value="T11901"/>
</dbReference>
<dbReference type="RefSeq" id="YP_143353.1">
    <property type="nucleotide sequence ID" value="NC_006461.1"/>
</dbReference>
<dbReference type="PDB" id="2FUG">
    <property type="method" value="X-ray"/>
    <property type="resolution" value="3.30 A"/>
    <property type="chains" value="4/D/M/V=1-409"/>
</dbReference>
<dbReference type="PDB" id="2YBB">
    <property type="method" value="EM"/>
    <property type="resolution" value="19.00 A"/>
    <property type="chains" value="4=1-409"/>
</dbReference>
<dbReference type="PDB" id="3I9V">
    <property type="method" value="X-ray"/>
    <property type="resolution" value="3.10 A"/>
    <property type="chains" value="4/D=1-409"/>
</dbReference>
<dbReference type="PDB" id="3IAM">
    <property type="method" value="X-ray"/>
    <property type="resolution" value="3.10 A"/>
    <property type="chains" value="4/D=1-409"/>
</dbReference>
<dbReference type="PDB" id="3IAS">
    <property type="method" value="X-ray"/>
    <property type="resolution" value="3.15 A"/>
    <property type="chains" value="4/D/M/V=1-409"/>
</dbReference>
<dbReference type="PDB" id="3M9S">
    <property type="method" value="X-ray"/>
    <property type="resolution" value="4.50 A"/>
    <property type="chains" value="4/D=1-409"/>
</dbReference>
<dbReference type="PDB" id="4HEA">
    <property type="method" value="X-ray"/>
    <property type="resolution" value="3.30 A"/>
    <property type="chains" value="4/E=1-409"/>
</dbReference>
<dbReference type="PDB" id="6I0D">
    <property type="method" value="X-ray"/>
    <property type="resolution" value="3.60 A"/>
    <property type="chains" value="4/E=1-409"/>
</dbReference>
<dbReference type="PDB" id="6I1P">
    <property type="method" value="X-ray"/>
    <property type="resolution" value="3.21 A"/>
    <property type="chains" value="4/E=1-409"/>
</dbReference>
<dbReference type="PDB" id="6Q8O">
    <property type="method" value="X-ray"/>
    <property type="resolution" value="3.60 A"/>
    <property type="chains" value="4/E=1-409"/>
</dbReference>
<dbReference type="PDB" id="6Q8W">
    <property type="method" value="X-ray"/>
    <property type="resolution" value="3.40 A"/>
    <property type="chains" value="4/E=1-409"/>
</dbReference>
<dbReference type="PDB" id="6Q8X">
    <property type="method" value="X-ray"/>
    <property type="resolution" value="3.51 A"/>
    <property type="chains" value="4/E=1-409"/>
</dbReference>
<dbReference type="PDB" id="6Y11">
    <property type="method" value="X-ray"/>
    <property type="resolution" value="3.11 A"/>
    <property type="chains" value="4/E=1-409"/>
</dbReference>
<dbReference type="PDB" id="6ZIY">
    <property type="method" value="EM"/>
    <property type="resolution" value="4.25 A"/>
    <property type="chains" value="4=1-409"/>
</dbReference>
<dbReference type="PDB" id="6ZJL">
    <property type="method" value="EM"/>
    <property type="resolution" value="4.30 A"/>
    <property type="chains" value="4=1-409"/>
</dbReference>
<dbReference type="PDB" id="6ZJN">
    <property type="method" value="EM"/>
    <property type="resolution" value="6.10 A"/>
    <property type="chains" value="4=1-409"/>
</dbReference>
<dbReference type="PDB" id="6ZJY">
    <property type="method" value="EM"/>
    <property type="resolution" value="5.50 A"/>
    <property type="chains" value="4=1-409"/>
</dbReference>
<dbReference type="PDBsum" id="2FUG"/>
<dbReference type="PDBsum" id="2YBB"/>
<dbReference type="PDBsum" id="3I9V"/>
<dbReference type="PDBsum" id="3IAM"/>
<dbReference type="PDBsum" id="3IAS"/>
<dbReference type="PDBsum" id="3M9S"/>
<dbReference type="PDBsum" id="4HEA"/>
<dbReference type="PDBsum" id="6I0D"/>
<dbReference type="PDBsum" id="6I1P"/>
<dbReference type="PDBsum" id="6Q8O"/>
<dbReference type="PDBsum" id="6Q8W"/>
<dbReference type="PDBsum" id="6Q8X"/>
<dbReference type="PDBsum" id="6Y11"/>
<dbReference type="PDBsum" id="6ZIY"/>
<dbReference type="PDBsum" id="6ZJL"/>
<dbReference type="PDBsum" id="6ZJN"/>
<dbReference type="PDBsum" id="6ZJY"/>
<dbReference type="EMDB" id="EMD-11231"/>
<dbReference type="EMDB" id="EMD-11235"/>
<dbReference type="EMDB" id="EMD-11237"/>
<dbReference type="EMDB" id="EMD-11238"/>
<dbReference type="SMR" id="Q56220"/>
<dbReference type="DIP" id="DIP-59262N"/>
<dbReference type="IntAct" id="Q56220">
    <property type="interactions" value="1"/>
</dbReference>
<dbReference type="TCDB" id="3.D.1.3.1">
    <property type="family name" value="the h+ or na+-translocating nadh dehydrogenase (ndh) family"/>
</dbReference>
<dbReference type="EnsemblBacteria" id="BAD69910">
    <property type="protein sequence ID" value="BAD69910"/>
    <property type="gene ID" value="BAD69910"/>
</dbReference>
<dbReference type="GeneID" id="3168206"/>
<dbReference type="KEGG" id="ttj:TTHA0087"/>
<dbReference type="PATRIC" id="fig|300852.9.peg.85"/>
<dbReference type="eggNOG" id="COG0649">
    <property type="taxonomic scope" value="Bacteria"/>
</dbReference>
<dbReference type="HOGENOM" id="CLU_015134_1_2_0"/>
<dbReference type="PhylomeDB" id="Q56220"/>
<dbReference type="EvolutionaryTrace" id="Q56220"/>
<dbReference type="Proteomes" id="UP000000532">
    <property type="component" value="Chromosome"/>
</dbReference>
<dbReference type="GO" id="GO:0005886">
    <property type="term" value="C:plasma membrane"/>
    <property type="evidence" value="ECO:0007669"/>
    <property type="project" value="UniProtKB-SubCell"/>
</dbReference>
<dbReference type="GO" id="GO:0051287">
    <property type="term" value="F:NAD binding"/>
    <property type="evidence" value="ECO:0007669"/>
    <property type="project" value="InterPro"/>
</dbReference>
<dbReference type="GO" id="GO:0050136">
    <property type="term" value="F:NADH:ubiquinone reductase (non-electrogenic) activity"/>
    <property type="evidence" value="ECO:0007669"/>
    <property type="project" value="UniProtKB-UniRule"/>
</dbReference>
<dbReference type="GO" id="GO:0048038">
    <property type="term" value="F:quinone binding"/>
    <property type="evidence" value="ECO:0007669"/>
    <property type="project" value="UniProtKB-KW"/>
</dbReference>
<dbReference type="Gene3D" id="1.10.645.10">
    <property type="entry name" value="Cytochrome-c3 Hydrogenase, chain B"/>
    <property type="match status" value="1"/>
</dbReference>
<dbReference type="HAMAP" id="MF_01358">
    <property type="entry name" value="NDH1_NuoD"/>
    <property type="match status" value="1"/>
</dbReference>
<dbReference type="InterPro" id="IPR001135">
    <property type="entry name" value="NADH_Q_OxRdtase_suD"/>
</dbReference>
<dbReference type="InterPro" id="IPR014029">
    <property type="entry name" value="NADH_UbQ_OxRdtase_49kDa_CS"/>
</dbReference>
<dbReference type="InterPro" id="IPR022885">
    <property type="entry name" value="NDH1_su_D/H"/>
</dbReference>
<dbReference type="InterPro" id="IPR029014">
    <property type="entry name" value="NiFe-Hase_large"/>
</dbReference>
<dbReference type="NCBIfam" id="TIGR01962">
    <property type="entry name" value="NuoD"/>
    <property type="match status" value="1"/>
</dbReference>
<dbReference type="NCBIfam" id="NF004739">
    <property type="entry name" value="PRK06075.1"/>
    <property type="match status" value="1"/>
</dbReference>
<dbReference type="PANTHER" id="PTHR11993:SF10">
    <property type="entry name" value="NADH DEHYDROGENASE [UBIQUINONE] IRON-SULFUR PROTEIN 2, MITOCHONDRIAL"/>
    <property type="match status" value="1"/>
</dbReference>
<dbReference type="PANTHER" id="PTHR11993">
    <property type="entry name" value="NADH-UBIQUINONE OXIDOREDUCTASE 49 KDA SUBUNIT"/>
    <property type="match status" value="1"/>
</dbReference>
<dbReference type="Pfam" id="PF00346">
    <property type="entry name" value="Complex1_49kDa"/>
    <property type="match status" value="1"/>
</dbReference>
<dbReference type="SUPFAM" id="SSF56762">
    <property type="entry name" value="HydB/Nqo4-like"/>
    <property type="match status" value="1"/>
</dbReference>
<dbReference type="PROSITE" id="PS00535">
    <property type="entry name" value="COMPLEX1_49K"/>
    <property type="match status" value="1"/>
</dbReference>
<keyword id="KW-0002">3D-structure</keyword>
<keyword id="KW-1003">Cell membrane</keyword>
<keyword id="KW-0903">Direct protein sequencing</keyword>
<keyword id="KW-0472">Membrane</keyword>
<keyword id="KW-0520">NAD</keyword>
<keyword id="KW-0874">Quinone</keyword>
<keyword id="KW-1185">Reference proteome</keyword>
<keyword id="KW-1278">Translocase</keyword>
<keyword id="KW-0813">Transport</keyword>
<organism>
    <name type="scientific">Thermus thermophilus (strain ATCC 27634 / DSM 579 / HB8)</name>
    <dbReference type="NCBI Taxonomy" id="300852"/>
    <lineage>
        <taxon>Bacteria</taxon>
        <taxon>Thermotogati</taxon>
        <taxon>Deinococcota</taxon>
        <taxon>Deinococci</taxon>
        <taxon>Thermales</taxon>
        <taxon>Thermaceae</taxon>
        <taxon>Thermus</taxon>
    </lineage>
</organism>
<reference key="1">
    <citation type="journal article" date="1997" name="J. Biol. Chem.">
        <title>The proton-translocating NADH-quinone oxidoreductase (NDH-1) of thermophilic bacterium Thermus thermophilus HB-8. Complete DNA sequence of the gene cluster and thermostable properties of the expressed NQO2 subunit.</title>
        <authorList>
            <person name="Yano T."/>
            <person name="Chu S.S."/>
            <person name="Sled' V.D."/>
            <person name="Ohnishi T."/>
            <person name="Yagi T."/>
        </authorList>
    </citation>
    <scope>NUCLEOTIDE SEQUENCE [GENOMIC DNA]</scope>
    <source>
        <strain>ATCC 27634 / DSM 579 / HB8</strain>
    </source>
</reference>
<reference key="2">
    <citation type="submission" date="2004-11" db="EMBL/GenBank/DDBJ databases">
        <title>Complete genome sequence of Thermus thermophilus HB8.</title>
        <authorList>
            <person name="Masui R."/>
            <person name="Kurokawa K."/>
            <person name="Nakagawa N."/>
            <person name="Tokunaga F."/>
            <person name="Koyama Y."/>
            <person name="Shibata T."/>
            <person name="Oshima T."/>
            <person name="Yokoyama S."/>
            <person name="Yasunaga T."/>
            <person name="Kuramitsu S."/>
        </authorList>
    </citation>
    <scope>NUCLEOTIDE SEQUENCE [LARGE SCALE GENOMIC DNA]</scope>
    <source>
        <strain>ATCC 27634 / DSM 579 / HB8</strain>
    </source>
</reference>
<reference key="3">
    <citation type="journal article" date="2006" name="Biochemistry">
        <title>Identification of a novel subunit of respiratory complex I from Thermus thermophilus.</title>
        <authorList>
            <person name="Hinchliffe P."/>
            <person name="Carroll J."/>
            <person name="Sazanov L.A."/>
        </authorList>
    </citation>
    <scope>PROTEIN SEQUENCE OF 1-8</scope>
    <scope>IDENTIFICATION BY MASS SPECTROMETRY</scope>
    <scope>FUNCTION</scope>
    <scope>SUBUNIT</scope>
    <source>
        <strain>ATCC 27634 / DSM 579 / HB8</strain>
    </source>
</reference>
<reference key="4">
    <citation type="journal article" date="2006" name="Science">
        <title>Structure of the hydrophilic domain of respiratory complex I from Thermus thermophilus.</title>
        <authorList>
            <person name="Sazanov L.A."/>
            <person name="Hinchliffe P."/>
        </authorList>
    </citation>
    <scope>X-RAY CRYSTALLOGRAPHY (3.3 ANGSTROMS) OF ENZYME HYDROPHILIC DOMAIN</scope>
    <scope>FUNCTION</scope>
    <scope>SUBUNIT</scope>
    <scope>SUBCELLULAR LOCATION</scope>
    <scope>ELECTRON TRANSFER MECHANISM</scope>
</reference>
<protein>
    <recommendedName>
        <fullName>NADH-quinone oxidoreductase subunit 4</fullName>
        <ecNumber>7.1.1.-</ecNumber>
    </recommendedName>
    <alternativeName>
        <fullName>NADH dehydrogenase I chain 4</fullName>
    </alternativeName>
    <alternativeName>
        <fullName>NDH-1 subunit 4</fullName>
    </alternativeName>
</protein>
<proteinExistence type="evidence at protein level"/>
<sequence>MREEFLEEIPLDAPPEEAKELRTEVMTLNVGPQHPSTHGVLRLMVTLSGEEVLEVVPHIGYLHTGFEKTMEHRTYLQNITYTPRMDYLHSFAHDLAYALAVEKLLGAVVPPRAETIRVILNELSRLASHLVFLGTGLLDLGALTPFFYAFRERETILDLFEWVTGQRFHHNYIRIGGVKEDLPEEFVPELKKLLEVLPHRIDEYEALFAESPIFYERARGVGVIPPEVAIDLGLTGGSLRASGVNYDVRKAYPYSGYETYTFDVPLGERGDVFDRMLVRIREMRESVKIIKQALERLEPGPVRDPNPQITPPPRHLLETSMEAVIYHFKHYTEGFHPPKGEVYVPTESARGELGYYIVSDGGSMPYRVKVRAPSFVNLQSLPYACKGEQVPDMVAIIASLDPVMGDVDR</sequence>
<feature type="chain" id="PRO_0000118617" description="NADH-quinone oxidoreductase subunit 4">
    <location>
        <begin position="1"/>
        <end position="409"/>
    </location>
</feature>
<feature type="strand" evidence="6">
    <location>
        <begin position="28"/>
        <end position="30"/>
    </location>
</feature>
<feature type="strand" evidence="7">
    <location>
        <begin position="38"/>
        <end position="40"/>
    </location>
</feature>
<feature type="strand" evidence="6">
    <location>
        <begin position="42"/>
        <end position="46"/>
    </location>
</feature>
<feature type="strand" evidence="5">
    <location>
        <begin position="48"/>
        <end position="51"/>
    </location>
</feature>
<feature type="strand" evidence="6">
    <location>
        <begin position="53"/>
        <end position="58"/>
    </location>
</feature>
<feature type="helix" evidence="5">
    <location>
        <begin position="66"/>
        <end position="69"/>
    </location>
</feature>
<feature type="helix" evidence="5">
    <location>
        <begin position="70"/>
        <end position="72"/>
    </location>
</feature>
<feature type="helix" evidence="5">
    <location>
        <begin position="77"/>
        <end position="80"/>
    </location>
</feature>
<feature type="helix" evidence="6">
    <location>
        <begin position="82"/>
        <end position="84"/>
    </location>
</feature>
<feature type="strand" evidence="5">
    <location>
        <begin position="85"/>
        <end position="89"/>
    </location>
</feature>
<feature type="helix" evidence="5">
    <location>
        <begin position="91"/>
        <end position="105"/>
    </location>
</feature>
<feature type="helix" evidence="5">
    <location>
        <begin position="111"/>
        <end position="139"/>
    </location>
</feature>
<feature type="helix" evidence="5">
    <location>
        <begin position="144"/>
        <end position="164"/>
    </location>
</feature>
<feature type="strand" evidence="5">
    <location>
        <begin position="165"/>
        <end position="169"/>
    </location>
</feature>
<feature type="strand" evidence="5">
    <location>
        <begin position="175"/>
        <end position="180"/>
    </location>
</feature>
<feature type="helix" evidence="5">
    <location>
        <begin position="186"/>
        <end position="209"/>
    </location>
</feature>
<feature type="helix" evidence="5">
    <location>
        <begin position="214"/>
        <end position="218"/>
    </location>
</feature>
<feature type="strand" evidence="5">
    <location>
        <begin position="219"/>
        <end position="222"/>
    </location>
</feature>
<feature type="helix" evidence="5">
    <location>
        <begin position="226"/>
        <end position="232"/>
    </location>
</feature>
<feature type="strand" evidence="5">
    <location>
        <begin position="236"/>
        <end position="239"/>
    </location>
</feature>
<feature type="helix" evidence="5">
    <location>
        <begin position="240"/>
        <end position="242"/>
    </location>
</feature>
<feature type="helix" evidence="5">
    <location>
        <begin position="248"/>
        <end position="251"/>
    </location>
</feature>
<feature type="helix" evidence="5">
    <location>
        <begin position="257"/>
        <end position="259"/>
    </location>
</feature>
<feature type="strand" evidence="5">
    <location>
        <begin position="268"/>
        <end position="270"/>
    </location>
</feature>
<feature type="helix" evidence="5">
    <location>
        <begin position="272"/>
        <end position="295"/>
    </location>
</feature>
<feature type="turn" evidence="5">
    <location>
        <begin position="307"/>
        <end position="309"/>
    </location>
</feature>
<feature type="helix" evidence="5">
    <location>
        <begin position="314"/>
        <end position="318"/>
    </location>
</feature>
<feature type="helix" evidence="5">
    <location>
        <begin position="321"/>
        <end position="332"/>
    </location>
</feature>
<feature type="strand" evidence="5">
    <location>
        <begin position="339"/>
        <end position="343"/>
    </location>
</feature>
<feature type="strand" evidence="5">
    <location>
        <begin position="346"/>
        <end position="348"/>
    </location>
</feature>
<feature type="strand" evidence="5">
    <location>
        <begin position="351"/>
        <end position="359"/>
    </location>
</feature>
<feature type="strand" evidence="5">
    <location>
        <begin position="361"/>
        <end position="364"/>
    </location>
</feature>
<feature type="strand" evidence="5">
    <location>
        <begin position="366"/>
        <end position="371"/>
    </location>
</feature>
<feature type="helix" evidence="5">
    <location>
        <begin position="373"/>
        <end position="376"/>
    </location>
</feature>
<feature type="turn" evidence="5">
    <location>
        <begin position="377"/>
        <end position="385"/>
    </location>
</feature>
<feature type="strand" evidence="5">
    <location>
        <begin position="386"/>
        <end position="388"/>
    </location>
</feature>
<feature type="helix" evidence="5">
    <location>
        <begin position="391"/>
        <end position="393"/>
    </location>
</feature>
<feature type="helix" evidence="5">
    <location>
        <begin position="395"/>
        <end position="398"/>
    </location>
</feature>
<feature type="helix" evidence="5">
    <location>
        <begin position="404"/>
        <end position="408"/>
    </location>
</feature>